<accession>Q4I5V3</accession>
<accession>A0A098DNR4</accession>
<accession>A0A0E0S989</accession>
<accession>I1RTA4</accession>
<accession>V6RI92</accession>
<name>EPL1_GIBZE</name>
<dbReference type="EMBL" id="DS231666">
    <property type="protein sequence ID" value="ESU13667.1"/>
    <property type="molecule type" value="Genomic_DNA"/>
</dbReference>
<dbReference type="EMBL" id="HG970335">
    <property type="protein sequence ID" value="CEF83002.1"/>
    <property type="molecule type" value="Genomic_DNA"/>
</dbReference>
<dbReference type="RefSeq" id="XP_011327174.1">
    <property type="nucleotide sequence ID" value="XM_011328872.1"/>
</dbReference>
<dbReference type="SMR" id="Q4I5V3"/>
<dbReference type="STRING" id="229533.Q4I5V3"/>
<dbReference type="GeneID" id="23554483"/>
<dbReference type="KEGG" id="fgr:FGSG_07405"/>
<dbReference type="VEuPathDB" id="FungiDB:FGRAMPH1_01G24745"/>
<dbReference type="eggNOG" id="KOG2261">
    <property type="taxonomic scope" value="Eukaryota"/>
</dbReference>
<dbReference type="HOGENOM" id="CLU_010580_1_0_1"/>
<dbReference type="InParanoid" id="Q4I5V3"/>
<dbReference type="OrthoDB" id="85910at110618"/>
<dbReference type="Proteomes" id="UP000070720">
    <property type="component" value="Chromosome 4"/>
</dbReference>
<dbReference type="GO" id="GO:0035267">
    <property type="term" value="C:NuA4 histone acetyltransferase complex"/>
    <property type="evidence" value="ECO:0007669"/>
    <property type="project" value="InterPro"/>
</dbReference>
<dbReference type="GO" id="GO:0005634">
    <property type="term" value="C:nucleus"/>
    <property type="evidence" value="ECO:0007669"/>
    <property type="project" value="UniProtKB-SubCell"/>
</dbReference>
<dbReference type="GO" id="GO:0006281">
    <property type="term" value="P:DNA repair"/>
    <property type="evidence" value="ECO:0007669"/>
    <property type="project" value="UniProtKB-KW"/>
</dbReference>
<dbReference type="GO" id="GO:0006357">
    <property type="term" value="P:regulation of transcription by RNA polymerase II"/>
    <property type="evidence" value="ECO:0007669"/>
    <property type="project" value="InterPro"/>
</dbReference>
<dbReference type="InterPro" id="IPR024943">
    <property type="entry name" value="Enhancer_polycomb"/>
</dbReference>
<dbReference type="InterPro" id="IPR019542">
    <property type="entry name" value="Enhancer_polycomb-like_N"/>
</dbReference>
<dbReference type="PANTHER" id="PTHR14898">
    <property type="entry name" value="ENHANCER OF POLYCOMB"/>
    <property type="match status" value="1"/>
</dbReference>
<dbReference type="Pfam" id="PF10513">
    <property type="entry name" value="EPL1"/>
    <property type="match status" value="1"/>
</dbReference>
<evidence type="ECO:0000250" key="1"/>
<evidence type="ECO:0000256" key="2">
    <source>
        <dbReference type="SAM" id="MobiDB-lite"/>
    </source>
</evidence>
<evidence type="ECO:0000305" key="3"/>
<proteinExistence type="inferred from homology"/>
<protein>
    <recommendedName>
        <fullName>Enhancer of polycomb-like protein 1</fullName>
    </recommendedName>
</protein>
<organism>
    <name type="scientific">Gibberella zeae (strain ATCC MYA-4620 / CBS 123657 / FGSC 9075 / NRRL 31084 / PH-1)</name>
    <name type="common">Wheat head blight fungus</name>
    <name type="synonym">Fusarium graminearum</name>
    <dbReference type="NCBI Taxonomy" id="229533"/>
    <lineage>
        <taxon>Eukaryota</taxon>
        <taxon>Fungi</taxon>
        <taxon>Dikarya</taxon>
        <taxon>Ascomycota</taxon>
        <taxon>Pezizomycotina</taxon>
        <taxon>Sordariomycetes</taxon>
        <taxon>Hypocreomycetidae</taxon>
        <taxon>Hypocreales</taxon>
        <taxon>Nectriaceae</taxon>
        <taxon>Fusarium</taxon>
    </lineage>
</organism>
<feature type="chain" id="PRO_0000214162" description="Enhancer of polycomb-like protein 1">
    <location>
        <begin position="1"/>
        <end position="590"/>
    </location>
</feature>
<feature type="region of interest" description="Disordered" evidence="2">
    <location>
        <begin position="302"/>
        <end position="335"/>
    </location>
</feature>
<feature type="region of interest" description="Disordered" evidence="2">
    <location>
        <begin position="471"/>
        <end position="497"/>
    </location>
</feature>
<feature type="compositionally biased region" description="Basic and acidic residues" evidence="2">
    <location>
        <begin position="475"/>
        <end position="488"/>
    </location>
</feature>
<sequence>MSSRKVRVKKLNVKTTLPVLREDQIDPNEYEALTTDNQIATGVEQAEENEYHLQTILKEAGTSNDQEIPVPPPQESDINYDDLYPVPFHKPSSYIRFSQTVEECITCLYDMTTEDDEFLKQYNSKPPATGVLSEDDFEHIMEVFEDTAAEQTPFAAVDNTVAAYDMMLPGLTHLNQSVSTDVLQHAKPVYEYWKSRRQEAGNKPLHPSLKFETHQETDDTDPFVCFRRREARQTRKTRARDNKIAETLKKLRRELEDGRQLVLLAYEREMVKREVMSMDRAIFEERARLKDMKLRLGIKGEDEDLVNQKPQKRKPVEPPVVRQPTGAHLRQPVRSDGRTLDADLVLLSDKLAEKETELRLDIEMKVQNHRKWNQNHIDLTREPLSPVKEQGTEVKFRQAKTQYLMTPPASTSSEMEVDEIAPDAMQLDKRESSVFQFTAGSGEQSKGSQPAFRRRIGRLNRLWIDRRGMVTPPRELGEDRSDRWKYDSDSDDEEPPVYEVDPFDTRALKFRATIPLNPYMFRGRPAVPPEAVAAAQAQAGNRVLPSPAAAAAHAHAQAHAQAAAAAHLAAQAQAKAQAVAQQQAQAAQGV</sequence>
<reference key="1">
    <citation type="journal article" date="2007" name="Science">
        <title>The Fusarium graminearum genome reveals a link between localized polymorphism and pathogen specialization.</title>
        <authorList>
            <person name="Cuomo C.A."/>
            <person name="Gueldener U."/>
            <person name="Xu J.-R."/>
            <person name="Trail F."/>
            <person name="Turgeon B.G."/>
            <person name="Di Pietro A."/>
            <person name="Walton J.D."/>
            <person name="Ma L.-J."/>
            <person name="Baker S.E."/>
            <person name="Rep M."/>
            <person name="Adam G."/>
            <person name="Antoniw J."/>
            <person name="Baldwin T."/>
            <person name="Calvo S.E."/>
            <person name="Chang Y.-L."/>
            <person name="DeCaprio D."/>
            <person name="Gale L.R."/>
            <person name="Gnerre S."/>
            <person name="Goswami R.S."/>
            <person name="Hammond-Kosack K."/>
            <person name="Harris L.J."/>
            <person name="Hilburn K."/>
            <person name="Kennell J.C."/>
            <person name="Kroken S."/>
            <person name="Magnuson J.K."/>
            <person name="Mannhaupt G."/>
            <person name="Mauceli E.W."/>
            <person name="Mewes H.-W."/>
            <person name="Mitterbauer R."/>
            <person name="Muehlbauer G."/>
            <person name="Muensterkoetter M."/>
            <person name="Nelson D."/>
            <person name="O'Donnell K."/>
            <person name="Ouellet T."/>
            <person name="Qi W."/>
            <person name="Quesneville H."/>
            <person name="Roncero M.I.G."/>
            <person name="Seong K.-Y."/>
            <person name="Tetko I.V."/>
            <person name="Urban M."/>
            <person name="Waalwijk C."/>
            <person name="Ward T.J."/>
            <person name="Yao J."/>
            <person name="Birren B.W."/>
            <person name="Kistler H.C."/>
        </authorList>
    </citation>
    <scope>NUCLEOTIDE SEQUENCE [LARGE SCALE GENOMIC DNA]</scope>
    <source>
        <strain>ATCC MYA-4620 / CBS 123657 / FGSC 9075 / NRRL 31084 / PH-1</strain>
    </source>
</reference>
<reference key="2">
    <citation type="journal article" date="2010" name="Nature">
        <title>Comparative genomics reveals mobile pathogenicity chromosomes in Fusarium.</title>
        <authorList>
            <person name="Ma L.-J."/>
            <person name="van der Does H.C."/>
            <person name="Borkovich K.A."/>
            <person name="Coleman J.J."/>
            <person name="Daboussi M.-J."/>
            <person name="Di Pietro A."/>
            <person name="Dufresne M."/>
            <person name="Freitag M."/>
            <person name="Grabherr M."/>
            <person name="Henrissat B."/>
            <person name="Houterman P.M."/>
            <person name="Kang S."/>
            <person name="Shim W.-B."/>
            <person name="Woloshuk C."/>
            <person name="Xie X."/>
            <person name="Xu J.-R."/>
            <person name="Antoniw J."/>
            <person name="Baker S.E."/>
            <person name="Bluhm B.H."/>
            <person name="Breakspear A."/>
            <person name="Brown D.W."/>
            <person name="Butchko R.A.E."/>
            <person name="Chapman S."/>
            <person name="Coulson R."/>
            <person name="Coutinho P.M."/>
            <person name="Danchin E.G.J."/>
            <person name="Diener A."/>
            <person name="Gale L.R."/>
            <person name="Gardiner D.M."/>
            <person name="Goff S."/>
            <person name="Hammond-Kosack K.E."/>
            <person name="Hilburn K."/>
            <person name="Hua-Van A."/>
            <person name="Jonkers W."/>
            <person name="Kazan K."/>
            <person name="Kodira C.D."/>
            <person name="Koehrsen M."/>
            <person name="Kumar L."/>
            <person name="Lee Y.-H."/>
            <person name="Li L."/>
            <person name="Manners J.M."/>
            <person name="Miranda-Saavedra D."/>
            <person name="Mukherjee M."/>
            <person name="Park G."/>
            <person name="Park J."/>
            <person name="Park S.-Y."/>
            <person name="Proctor R.H."/>
            <person name="Regev A."/>
            <person name="Ruiz-Roldan M.C."/>
            <person name="Sain D."/>
            <person name="Sakthikumar S."/>
            <person name="Sykes S."/>
            <person name="Schwartz D.C."/>
            <person name="Turgeon B.G."/>
            <person name="Wapinski I."/>
            <person name="Yoder O."/>
            <person name="Young S."/>
            <person name="Zeng Q."/>
            <person name="Zhou S."/>
            <person name="Galagan J."/>
            <person name="Cuomo C.A."/>
            <person name="Kistler H.C."/>
            <person name="Rep M."/>
        </authorList>
    </citation>
    <scope>GENOME REANNOTATION</scope>
    <source>
        <strain>ATCC MYA-4620 / CBS 123657 / FGSC 9075 / NRRL 31084 / PH-1</strain>
    </source>
</reference>
<reference key="3">
    <citation type="journal article" date="2015" name="BMC Genomics">
        <title>The completed genome sequence of the pathogenic ascomycete fungus Fusarium graminearum.</title>
        <authorList>
            <person name="King R."/>
            <person name="Urban M."/>
            <person name="Hammond-Kosack M.C.U."/>
            <person name="Hassani-Pak K."/>
            <person name="Hammond-Kosack K.E."/>
        </authorList>
    </citation>
    <scope>NUCLEOTIDE SEQUENCE [LARGE SCALE GENOMIC DNA]</scope>
    <source>
        <strain>ATCC MYA-4620 / CBS 123657 / FGSC 9075 / NRRL 31084 / PH-1</strain>
    </source>
</reference>
<comment type="function">
    <text evidence="1">Component of the NuA4 histone acetyltransferase complex which is involved in transcriptional activation of selected genes principally by acetylation of nucleosomal histone H4 and H2A. The NuA4 complex is also involved in DNA repair. Involved in gene silencing by neighboring heterochromatin, blockage of the silencing spreading along the chromosome, and required for cell cycle progression through G2/M (By similarity).</text>
</comment>
<comment type="subunit">
    <text evidence="1">Component of the NuA4 histone acetyltransferase complex.</text>
</comment>
<comment type="subcellular location">
    <subcellularLocation>
        <location evidence="1">Nucleus</location>
    </subcellularLocation>
</comment>
<comment type="similarity">
    <text evidence="3">Belongs to the enhancer of polycomb family.</text>
</comment>
<keyword id="KW-0131">Cell cycle</keyword>
<keyword id="KW-0227">DNA damage</keyword>
<keyword id="KW-0234">DNA repair</keyword>
<keyword id="KW-0539">Nucleus</keyword>
<keyword id="KW-1185">Reference proteome</keyword>
<keyword id="KW-0804">Transcription</keyword>
<keyword id="KW-0805">Transcription regulation</keyword>
<gene>
    <name type="primary">EPL1</name>
    <name type="ORF">FGRRES_07405</name>
    <name type="ORF">FGSG_07405</name>
</gene>